<accession>P0DQB7</accession>
<keyword id="KW-1015">Disulfide bond</keyword>
<keyword id="KW-0964">Secreted</keyword>
<keyword id="KW-0732">Signal</keyword>
<keyword id="KW-0800">Toxin</keyword>
<proteinExistence type="inferred from homology"/>
<feature type="signal peptide" evidence="1">
    <location>
        <begin position="1"/>
        <end position="20"/>
    </location>
</feature>
<feature type="chain" id="PRO_0000446790" description="U-scoloptoxin(15)-Sa1a" evidence="3">
    <location>
        <begin position="21"/>
        <end position="73"/>
    </location>
</feature>
<evidence type="ECO:0000255" key="1"/>
<evidence type="ECO:0000303" key="2">
    <source>
    </source>
</evidence>
<evidence type="ECO:0000305" key="3"/>
<evidence type="ECO:0000305" key="4">
    <source>
    </source>
</evidence>
<organism>
    <name type="scientific">Scolopendra alternans</name>
    <name type="common">Florida Keys giant centipede</name>
    <dbReference type="NCBI Taxonomy" id="1329349"/>
    <lineage>
        <taxon>Eukaryota</taxon>
        <taxon>Metazoa</taxon>
        <taxon>Ecdysozoa</taxon>
        <taxon>Arthropoda</taxon>
        <taxon>Myriapoda</taxon>
        <taxon>Chilopoda</taxon>
        <taxon>Pleurostigmophora</taxon>
        <taxon>Scolopendromorpha</taxon>
        <taxon>Scolopendridae</taxon>
        <taxon>Scolopendra</taxon>
    </lineage>
</organism>
<protein>
    <recommendedName>
        <fullName evidence="2">U-scoloptoxin(15)-Sa1a</fullName>
        <shortName evidence="2">U-SLPTX(15)-Sa1a</shortName>
    </recommendedName>
</protein>
<comment type="subcellular location">
    <subcellularLocation>
        <location evidence="4">Secreted</location>
    </subcellularLocation>
</comment>
<comment type="tissue specificity">
    <text evidence="4">Expressed by the venom gland.</text>
</comment>
<comment type="PTM">
    <text evidence="3">Contains 2 disulfide bonds.</text>
</comment>
<comment type="similarity">
    <text evidence="3">Belongs to the scoloptoxin-15 family.</text>
</comment>
<comment type="online information" name="National Center for Biotechnology Information (NCBI)">
    <link uri="https://www.ncbi.nlm.nih.gov/nuccore/GASH01000148"/>
</comment>
<name>TXF1A_SCOAL</name>
<dbReference type="SMR" id="P0DQB7"/>
<dbReference type="GO" id="GO:0005576">
    <property type="term" value="C:extracellular region"/>
    <property type="evidence" value="ECO:0007669"/>
    <property type="project" value="UniProtKB-SubCell"/>
</dbReference>
<dbReference type="GO" id="GO:0090729">
    <property type="term" value="F:toxin activity"/>
    <property type="evidence" value="ECO:0007669"/>
    <property type="project" value="UniProtKB-KW"/>
</dbReference>
<reference key="1">
    <citation type="journal article" date="2014" name="Mol. Biol. Evol.">
        <title>Clawing through evolution: toxin diversification and convergence in the ancient lineage Chilopoda (centipedes).</title>
        <authorList>
            <person name="Undheim E.A."/>
            <person name="Jones A."/>
            <person name="Clauser K.R."/>
            <person name="Holland J.W."/>
            <person name="Pineda S.S."/>
            <person name="King G.F."/>
            <person name="Fry B.G."/>
        </authorList>
    </citation>
    <scope>NUCLEOTIDE SEQUENCE [MRNA]</scope>
    <scope>NOMENCLATURE</scope>
    <source>
        <tissue>Venom gland</tissue>
    </source>
</reference>
<sequence length="73" mass="8296">MKFHIIFCLLAALMMTSAFAEVTVEPLRHSNKNPTESECKNACADAYAKGDQSRIPEAHNFRDYYCNCHITVQ</sequence>